<protein>
    <recommendedName>
        <fullName evidence="1">Valine--tRNA ligase</fullName>
        <ecNumber evidence="1">6.1.1.9</ecNumber>
    </recommendedName>
    <alternativeName>
        <fullName evidence="1">Valyl-tRNA synthetase</fullName>
        <shortName evidence="1">ValRS</shortName>
    </alternativeName>
</protein>
<comment type="function">
    <text evidence="1">Catalyzes the attachment of valine to tRNA(Val). As ValRS can inadvertently accommodate and process structurally similar amino acids such as threonine, to avoid such errors, it has a 'posttransfer' editing activity that hydrolyzes mischarged Thr-tRNA(Val) in a tRNA-dependent manner.</text>
</comment>
<comment type="catalytic activity">
    <reaction evidence="1">
        <text>tRNA(Val) + L-valine + ATP = L-valyl-tRNA(Val) + AMP + diphosphate</text>
        <dbReference type="Rhea" id="RHEA:10704"/>
        <dbReference type="Rhea" id="RHEA-COMP:9672"/>
        <dbReference type="Rhea" id="RHEA-COMP:9708"/>
        <dbReference type="ChEBI" id="CHEBI:30616"/>
        <dbReference type="ChEBI" id="CHEBI:33019"/>
        <dbReference type="ChEBI" id="CHEBI:57762"/>
        <dbReference type="ChEBI" id="CHEBI:78442"/>
        <dbReference type="ChEBI" id="CHEBI:78537"/>
        <dbReference type="ChEBI" id="CHEBI:456215"/>
        <dbReference type="EC" id="6.1.1.9"/>
    </reaction>
</comment>
<comment type="subunit">
    <text evidence="1">Monomer.</text>
</comment>
<comment type="subcellular location">
    <subcellularLocation>
        <location evidence="1">Cytoplasm</location>
    </subcellularLocation>
</comment>
<comment type="domain">
    <text evidence="1">ValRS has two distinct active sites: one for aminoacylation and one for editing. The misactivated threonine is translocated from the active site to the editing site.</text>
</comment>
<comment type="domain">
    <text evidence="1">The C-terminal coiled-coil domain is crucial for aminoacylation activity.</text>
</comment>
<comment type="similarity">
    <text evidence="1">Belongs to the class-I aminoacyl-tRNA synthetase family. ValS type 1 subfamily.</text>
</comment>
<keyword id="KW-0030">Aminoacyl-tRNA synthetase</keyword>
<keyword id="KW-0067">ATP-binding</keyword>
<keyword id="KW-0175">Coiled coil</keyword>
<keyword id="KW-0963">Cytoplasm</keyword>
<keyword id="KW-0436">Ligase</keyword>
<keyword id="KW-0547">Nucleotide-binding</keyword>
<keyword id="KW-0648">Protein biosynthesis</keyword>
<keyword id="KW-1185">Reference proteome</keyword>
<gene>
    <name evidence="1" type="primary">valS</name>
    <name type="ordered locus">BA_4690</name>
    <name type="ordered locus">GBAA_4690</name>
    <name type="ordered locus">BAS4355</name>
</gene>
<reference key="1">
    <citation type="journal article" date="2003" name="Nature">
        <title>The genome sequence of Bacillus anthracis Ames and comparison to closely related bacteria.</title>
        <authorList>
            <person name="Read T.D."/>
            <person name="Peterson S.N."/>
            <person name="Tourasse N.J."/>
            <person name="Baillie L.W."/>
            <person name="Paulsen I.T."/>
            <person name="Nelson K.E."/>
            <person name="Tettelin H."/>
            <person name="Fouts D.E."/>
            <person name="Eisen J.A."/>
            <person name="Gill S.R."/>
            <person name="Holtzapple E.K."/>
            <person name="Okstad O.A."/>
            <person name="Helgason E."/>
            <person name="Rilstone J."/>
            <person name="Wu M."/>
            <person name="Kolonay J.F."/>
            <person name="Beanan M.J."/>
            <person name="Dodson R.J."/>
            <person name="Brinkac L.M."/>
            <person name="Gwinn M.L."/>
            <person name="DeBoy R.T."/>
            <person name="Madpu R."/>
            <person name="Daugherty S.C."/>
            <person name="Durkin A.S."/>
            <person name="Haft D.H."/>
            <person name="Nelson W.C."/>
            <person name="Peterson J.D."/>
            <person name="Pop M."/>
            <person name="Khouri H.M."/>
            <person name="Radune D."/>
            <person name="Benton J.L."/>
            <person name="Mahamoud Y."/>
            <person name="Jiang L."/>
            <person name="Hance I.R."/>
            <person name="Weidman J.F."/>
            <person name="Berry K.J."/>
            <person name="Plaut R.D."/>
            <person name="Wolf A.M."/>
            <person name="Watkins K.L."/>
            <person name="Nierman W.C."/>
            <person name="Hazen A."/>
            <person name="Cline R.T."/>
            <person name="Redmond C."/>
            <person name="Thwaite J.E."/>
            <person name="White O."/>
            <person name="Salzberg S.L."/>
            <person name="Thomason B."/>
            <person name="Friedlander A.M."/>
            <person name="Koehler T.M."/>
            <person name="Hanna P.C."/>
            <person name="Kolstoe A.-B."/>
            <person name="Fraser C.M."/>
        </authorList>
    </citation>
    <scope>NUCLEOTIDE SEQUENCE [LARGE SCALE GENOMIC DNA]</scope>
    <source>
        <strain>Ames / isolate Porton</strain>
    </source>
</reference>
<reference key="2">
    <citation type="journal article" date="2009" name="J. Bacteriol.">
        <title>The complete genome sequence of Bacillus anthracis Ames 'Ancestor'.</title>
        <authorList>
            <person name="Ravel J."/>
            <person name="Jiang L."/>
            <person name="Stanley S.T."/>
            <person name="Wilson M.R."/>
            <person name="Decker R.S."/>
            <person name="Read T.D."/>
            <person name="Worsham P."/>
            <person name="Keim P.S."/>
            <person name="Salzberg S.L."/>
            <person name="Fraser-Liggett C.M."/>
            <person name="Rasko D.A."/>
        </authorList>
    </citation>
    <scope>NUCLEOTIDE SEQUENCE [LARGE SCALE GENOMIC DNA]</scope>
    <source>
        <strain>Ames ancestor</strain>
    </source>
</reference>
<reference key="3">
    <citation type="submission" date="2004-01" db="EMBL/GenBank/DDBJ databases">
        <title>Complete genome sequence of Bacillus anthracis Sterne.</title>
        <authorList>
            <person name="Brettin T.S."/>
            <person name="Bruce D."/>
            <person name="Challacombe J.F."/>
            <person name="Gilna P."/>
            <person name="Han C."/>
            <person name="Hill K."/>
            <person name="Hitchcock P."/>
            <person name="Jackson P."/>
            <person name="Keim P."/>
            <person name="Longmire J."/>
            <person name="Lucas S."/>
            <person name="Okinaka R."/>
            <person name="Richardson P."/>
            <person name="Rubin E."/>
            <person name="Tice H."/>
        </authorList>
    </citation>
    <scope>NUCLEOTIDE SEQUENCE [LARGE SCALE GENOMIC DNA]</scope>
    <source>
        <strain>Sterne</strain>
    </source>
</reference>
<sequence>MSNTEKNLPTKYDHMSVEEGLYQWWLEGKYFEATGDEKKQPYTIVIPPPNVTGKLHLGHAWDTTLQDILTRTKRMQGYDVLWLPGMDHAGIATQAKVEGKLREEGISRYDLGREKFLEKAWEWKEEYASHIRQQWGKVGLGLDYSRERFTLDKGLSDAVNKVFVQLYEKGLIYRGEYIINWDPATRTALSDIEVIHKEVQGAFYHMNYPLTDGSGHIRLATTRPETMLGDTAVAVHPEDDRYKHLIGKTVTLPIVGREIPIIADEYVEKDFGTGVVKITPAHDPNDFEVGNRHDLPRILVMNEDGSMNEKAGKYNGMDRFECRKALVKDLQEAGVLVEIEPHMHSVGHSERSGAVVEPYLSTQWFVKMAPLAEKAIELQQKEEEKVTFVPDRFENTYLRWMENIHDWCISRQLWWGHRIPAWYHKETGEVYVGTEAPADIENWNQDNDVLDTWFSSALWPFSTLGWPNEDAADFKRYYSTDALVTGYDIIFFWVSRMIFQGLEFTGERPFKDVLIHGLVRDEQGRKMSKSLGNGIDPMDVIEKYGADAMRFFLSTGSAPGQDLRFSMEKVESTWNFINKIWNASRFVLMNMDDMKYEEIDLTGEKSVADKWILTRLNETIESVTRNMDKYEFGEAGRSLYNFIWDDFCDWYIEMAKLPLYGEDEAAKKTTRSILAYVLDQTMRLLHPFMPFVTEKIWQHLPHEGESITVAAWPTVREDLQDTEAAAEMHLLVDIIRSVRNIRAEVNTPMSKKVQMQIKAKDEAVLAQLTKNSSYIERFCNPSELTIQTDLQAPEKAMTAIVTGAELFLPLADLINLDEERARLEKELEKFDKEVERVQKKLSNQGFVAKAPAAVIEGERAKEQDYLEKREAVRQRLADLEK</sequence>
<feature type="chain" id="PRO_0000224430" description="Valine--tRNA ligase">
    <location>
        <begin position="1"/>
        <end position="881"/>
    </location>
</feature>
<feature type="coiled-coil region" evidence="1">
    <location>
        <begin position="810"/>
        <end position="881"/>
    </location>
</feature>
<feature type="short sequence motif" description="'HIGH' region">
    <location>
        <begin position="49"/>
        <end position="59"/>
    </location>
</feature>
<feature type="short sequence motif" description="'KMSKS' region">
    <location>
        <begin position="526"/>
        <end position="530"/>
    </location>
</feature>
<feature type="binding site" evidence="1">
    <location>
        <position position="529"/>
    </location>
    <ligand>
        <name>ATP</name>
        <dbReference type="ChEBI" id="CHEBI:30616"/>
    </ligand>
</feature>
<accession>Q81LD3</accession>
<accession>Q6HST6</accession>
<accession>Q6KM29</accession>
<proteinExistence type="inferred from homology"/>
<name>SYV_BACAN</name>
<dbReference type="EC" id="6.1.1.9" evidence="1"/>
<dbReference type="EMBL" id="AE016879">
    <property type="protein sequence ID" value="AAP28389.1"/>
    <property type="molecule type" value="Genomic_DNA"/>
</dbReference>
<dbReference type="EMBL" id="AE017334">
    <property type="protein sequence ID" value="AAT33813.1"/>
    <property type="molecule type" value="Genomic_DNA"/>
</dbReference>
<dbReference type="EMBL" id="AE017225">
    <property type="protein sequence ID" value="AAT56653.1"/>
    <property type="molecule type" value="Genomic_DNA"/>
</dbReference>
<dbReference type="RefSeq" id="NP_846903.1">
    <property type="nucleotide sequence ID" value="NC_003997.3"/>
</dbReference>
<dbReference type="RefSeq" id="WP_000072239.1">
    <property type="nucleotide sequence ID" value="NZ_WXXJ01000027.1"/>
</dbReference>
<dbReference type="RefSeq" id="YP_030602.1">
    <property type="nucleotide sequence ID" value="NC_005945.1"/>
</dbReference>
<dbReference type="SMR" id="Q81LD3"/>
<dbReference type="STRING" id="261594.GBAA_4690"/>
<dbReference type="DNASU" id="1083718"/>
<dbReference type="GeneID" id="45024330"/>
<dbReference type="KEGG" id="ban:BA_4690"/>
<dbReference type="KEGG" id="bar:GBAA_4690"/>
<dbReference type="KEGG" id="bat:BAS4355"/>
<dbReference type="PATRIC" id="fig|198094.11.peg.4655"/>
<dbReference type="eggNOG" id="COG0525">
    <property type="taxonomic scope" value="Bacteria"/>
</dbReference>
<dbReference type="HOGENOM" id="CLU_001493_0_2_9"/>
<dbReference type="OMA" id="LDTWMDS"/>
<dbReference type="OrthoDB" id="9810365at2"/>
<dbReference type="Proteomes" id="UP000000427">
    <property type="component" value="Chromosome"/>
</dbReference>
<dbReference type="Proteomes" id="UP000000594">
    <property type="component" value="Chromosome"/>
</dbReference>
<dbReference type="GO" id="GO:0005829">
    <property type="term" value="C:cytosol"/>
    <property type="evidence" value="ECO:0007669"/>
    <property type="project" value="TreeGrafter"/>
</dbReference>
<dbReference type="GO" id="GO:0002161">
    <property type="term" value="F:aminoacyl-tRNA deacylase activity"/>
    <property type="evidence" value="ECO:0007669"/>
    <property type="project" value="InterPro"/>
</dbReference>
<dbReference type="GO" id="GO:0005524">
    <property type="term" value="F:ATP binding"/>
    <property type="evidence" value="ECO:0007669"/>
    <property type="project" value="UniProtKB-UniRule"/>
</dbReference>
<dbReference type="GO" id="GO:0004832">
    <property type="term" value="F:valine-tRNA ligase activity"/>
    <property type="evidence" value="ECO:0007669"/>
    <property type="project" value="UniProtKB-UniRule"/>
</dbReference>
<dbReference type="GO" id="GO:0006438">
    <property type="term" value="P:valyl-tRNA aminoacylation"/>
    <property type="evidence" value="ECO:0007669"/>
    <property type="project" value="UniProtKB-UniRule"/>
</dbReference>
<dbReference type="CDD" id="cd07962">
    <property type="entry name" value="Anticodon_Ia_Val"/>
    <property type="match status" value="1"/>
</dbReference>
<dbReference type="CDD" id="cd00817">
    <property type="entry name" value="ValRS_core"/>
    <property type="match status" value="1"/>
</dbReference>
<dbReference type="FunFam" id="1.10.287.380:FF:000001">
    <property type="entry name" value="Valine--tRNA ligase"/>
    <property type="match status" value="1"/>
</dbReference>
<dbReference type="FunFam" id="1.10.730.10:FF:000014">
    <property type="entry name" value="Valine--tRNA ligase"/>
    <property type="match status" value="1"/>
</dbReference>
<dbReference type="FunFam" id="3.40.50.620:FF:000032">
    <property type="entry name" value="Valine--tRNA ligase"/>
    <property type="match status" value="1"/>
</dbReference>
<dbReference type="FunFam" id="3.40.50.620:FF:000098">
    <property type="entry name" value="Valine--tRNA ligase"/>
    <property type="match status" value="1"/>
</dbReference>
<dbReference type="FunFam" id="3.90.740.10:FF:000005">
    <property type="entry name" value="Valine--tRNA ligase, mitochondrial"/>
    <property type="match status" value="1"/>
</dbReference>
<dbReference type="Gene3D" id="3.40.50.620">
    <property type="entry name" value="HUPs"/>
    <property type="match status" value="2"/>
</dbReference>
<dbReference type="Gene3D" id="1.10.730.10">
    <property type="entry name" value="Isoleucyl-tRNA Synthetase, Domain 1"/>
    <property type="match status" value="1"/>
</dbReference>
<dbReference type="Gene3D" id="1.10.287.380">
    <property type="entry name" value="Valyl-tRNA synthetase, C-terminal domain"/>
    <property type="match status" value="1"/>
</dbReference>
<dbReference type="Gene3D" id="3.90.740.10">
    <property type="entry name" value="Valyl/Leucyl/Isoleucyl-tRNA synthetase, editing domain"/>
    <property type="match status" value="1"/>
</dbReference>
<dbReference type="HAMAP" id="MF_02004">
    <property type="entry name" value="Val_tRNA_synth_type1"/>
    <property type="match status" value="1"/>
</dbReference>
<dbReference type="InterPro" id="IPR001412">
    <property type="entry name" value="aa-tRNA-synth_I_CS"/>
</dbReference>
<dbReference type="InterPro" id="IPR002300">
    <property type="entry name" value="aa-tRNA-synth_Ia"/>
</dbReference>
<dbReference type="InterPro" id="IPR033705">
    <property type="entry name" value="Anticodon_Ia_Val"/>
</dbReference>
<dbReference type="InterPro" id="IPR013155">
    <property type="entry name" value="M/V/L/I-tRNA-synth_anticd-bd"/>
</dbReference>
<dbReference type="InterPro" id="IPR014729">
    <property type="entry name" value="Rossmann-like_a/b/a_fold"/>
</dbReference>
<dbReference type="InterPro" id="IPR010978">
    <property type="entry name" value="tRNA-bd_arm"/>
</dbReference>
<dbReference type="InterPro" id="IPR009080">
    <property type="entry name" value="tRNAsynth_Ia_anticodon-bd"/>
</dbReference>
<dbReference type="InterPro" id="IPR037118">
    <property type="entry name" value="Val-tRNA_synth_C_sf"/>
</dbReference>
<dbReference type="InterPro" id="IPR019499">
    <property type="entry name" value="Val-tRNA_synth_tRNA-bd"/>
</dbReference>
<dbReference type="InterPro" id="IPR009008">
    <property type="entry name" value="Val/Leu/Ile-tRNA-synth_edit"/>
</dbReference>
<dbReference type="InterPro" id="IPR002303">
    <property type="entry name" value="Valyl-tRNA_ligase"/>
</dbReference>
<dbReference type="NCBIfam" id="NF004349">
    <property type="entry name" value="PRK05729.1"/>
    <property type="match status" value="1"/>
</dbReference>
<dbReference type="NCBIfam" id="TIGR00422">
    <property type="entry name" value="valS"/>
    <property type="match status" value="1"/>
</dbReference>
<dbReference type="PANTHER" id="PTHR11946:SF93">
    <property type="entry name" value="VALINE--TRNA LIGASE, CHLOROPLASTIC_MITOCHONDRIAL 2"/>
    <property type="match status" value="1"/>
</dbReference>
<dbReference type="PANTHER" id="PTHR11946">
    <property type="entry name" value="VALYL-TRNA SYNTHETASES"/>
    <property type="match status" value="1"/>
</dbReference>
<dbReference type="Pfam" id="PF08264">
    <property type="entry name" value="Anticodon_1"/>
    <property type="match status" value="1"/>
</dbReference>
<dbReference type="Pfam" id="PF00133">
    <property type="entry name" value="tRNA-synt_1"/>
    <property type="match status" value="2"/>
</dbReference>
<dbReference type="Pfam" id="PF10458">
    <property type="entry name" value="Val_tRNA-synt_C"/>
    <property type="match status" value="1"/>
</dbReference>
<dbReference type="PRINTS" id="PR00986">
    <property type="entry name" value="TRNASYNTHVAL"/>
</dbReference>
<dbReference type="SUPFAM" id="SSF47323">
    <property type="entry name" value="Anticodon-binding domain of a subclass of class I aminoacyl-tRNA synthetases"/>
    <property type="match status" value="1"/>
</dbReference>
<dbReference type="SUPFAM" id="SSF52374">
    <property type="entry name" value="Nucleotidylyl transferase"/>
    <property type="match status" value="1"/>
</dbReference>
<dbReference type="SUPFAM" id="SSF46589">
    <property type="entry name" value="tRNA-binding arm"/>
    <property type="match status" value="1"/>
</dbReference>
<dbReference type="SUPFAM" id="SSF50677">
    <property type="entry name" value="ValRS/IleRS/LeuRS editing domain"/>
    <property type="match status" value="1"/>
</dbReference>
<dbReference type="PROSITE" id="PS00178">
    <property type="entry name" value="AA_TRNA_LIGASE_I"/>
    <property type="match status" value="1"/>
</dbReference>
<organism>
    <name type="scientific">Bacillus anthracis</name>
    <dbReference type="NCBI Taxonomy" id="1392"/>
    <lineage>
        <taxon>Bacteria</taxon>
        <taxon>Bacillati</taxon>
        <taxon>Bacillota</taxon>
        <taxon>Bacilli</taxon>
        <taxon>Bacillales</taxon>
        <taxon>Bacillaceae</taxon>
        <taxon>Bacillus</taxon>
        <taxon>Bacillus cereus group</taxon>
    </lineage>
</organism>
<evidence type="ECO:0000255" key="1">
    <source>
        <dbReference type="HAMAP-Rule" id="MF_02004"/>
    </source>
</evidence>